<dbReference type="EMBL" id="AM933173">
    <property type="protein sequence ID" value="CAR38052.1"/>
    <property type="molecule type" value="Genomic_DNA"/>
</dbReference>
<dbReference type="RefSeq" id="WP_000045719.1">
    <property type="nucleotide sequence ID" value="NC_011274.1"/>
</dbReference>
<dbReference type="SMR" id="B5RC20"/>
<dbReference type="KEGG" id="seg:SG2217"/>
<dbReference type="HOGENOM" id="CLU_113736_1_1_6"/>
<dbReference type="Proteomes" id="UP000008321">
    <property type="component" value="Chromosome"/>
</dbReference>
<dbReference type="GO" id="GO:0005886">
    <property type="term" value="C:plasma membrane"/>
    <property type="evidence" value="ECO:0007669"/>
    <property type="project" value="UniProtKB-SubCell"/>
</dbReference>
<dbReference type="HAMAP" id="MF_01144">
    <property type="entry name" value="UPF0299"/>
    <property type="match status" value="1"/>
</dbReference>
<dbReference type="InterPro" id="IPR005538">
    <property type="entry name" value="LrgA/CidA"/>
</dbReference>
<dbReference type="InterPro" id="IPR022957">
    <property type="entry name" value="Uncharacterised_UPF0299"/>
</dbReference>
<dbReference type="NCBIfam" id="NF002494">
    <property type="entry name" value="PRK01821.1"/>
    <property type="match status" value="1"/>
</dbReference>
<dbReference type="PANTHER" id="PTHR33931">
    <property type="entry name" value="HOLIN-LIKE PROTEIN CIDA-RELATED"/>
    <property type="match status" value="1"/>
</dbReference>
<dbReference type="PANTHER" id="PTHR33931:SF5">
    <property type="entry name" value="UPF0299 MEMBRANE PROTEIN YOHJ"/>
    <property type="match status" value="1"/>
</dbReference>
<dbReference type="Pfam" id="PF03788">
    <property type="entry name" value="LrgA"/>
    <property type="match status" value="1"/>
</dbReference>
<keyword id="KW-0997">Cell inner membrane</keyword>
<keyword id="KW-1003">Cell membrane</keyword>
<keyword id="KW-0472">Membrane</keyword>
<keyword id="KW-0812">Transmembrane</keyword>
<keyword id="KW-1133">Transmembrane helix</keyword>
<accession>B5RC20</accession>
<feature type="chain" id="PRO_1000137370" description="UPF0299 membrane protein YohJ">
    <location>
        <begin position="1"/>
        <end position="132"/>
    </location>
</feature>
<feature type="transmembrane region" description="Helical" evidence="1">
    <location>
        <begin position="7"/>
        <end position="27"/>
    </location>
</feature>
<feature type="transmembrane region" description="Helical" evidence="1">
    <location>
        <begin position="31"/>
        <end position="51"/>
    </location>
</feature>
<feature type="transmembrane region" description="Helical" evidence="1">
    <location>
        <begin position="63"/>
        <end position="83"/>
    </location>
</feature>
<feature type="transmembrane region" description="Helical" evidence="1">
    <location>
        <begin position="93"/>
        <end position="113"/>
    </location>
</feature>
<gene>
    <name evidence="1" type="primary">yohJ</name>
    <name type="ordered locus">SG2217</name>
</gene>
<evidence type="ECO:0000255" key="1">
    <source>
        <dbReference type="HAMAP-Rule" id="MF_01144"/>
    </source>
</evidence>
<comment type="subcellular location">
    <subcellularLocation>
        <location evidence="1">Cell inner membrane</location>
        <topology evidence="1">Multi-pass membrane protein</topology>
    </subcellularLocation>
</comment>
<comment type="similarity">
    <text evidence="1">Belongs to the UPF0299 family.</text>
</comment>
<reference key="1">
    <citation type="journal article" date="2008" name="Genome Res.">
        <title>Comparative genome analysis of Salmonella enteritidis PT4 and Salmonella gallinarum 287/91 provides insights into evolutionary and host adaptation pathways.</title>
        <authorList>
            <person name="Thomson N.R."/>
            <person name="Clayton D.J."/>
            <person name="Windhorst D."/>
            <person name="Vernikos G."/>
            <person name="Davidson S."/>
            <person name="Churcher C."/>
            <person name="Quail M.A."/>
            <person name="Stevens M."/>
            <person name="Jones M.A."/>
            <person name="Watson M."/>
            <person name="Barron A."/>
            <person name="Layton A."/>
            <person name="Pickard D."/>
            <person name="Kingsley R.A."/>
            <person name="Bignell A."/>
            <person name="Clark L."/>
            <person name="Harris B."/>
            <person name="Ormond D."/>
            <person name="Abdellah Z."/>
            <person name="Brooks K."/>
            <person name="Cherevach I."/>
            <person name="Chillingworth T."/>
            <person name="Woodward J."/>
            <person name="Norberczak H."/>
            <person name="Lord A."/>
            <person name="Arrowsmith C."/>
            <person name="Jagels K."/>
            <person name="Moule S."/>
            <person name="Mungall K."/>
            <person name="Saunders M."/>
            <person name="Whitehead S."/>
            <person name="Chabalgoity J.A."/>
            <person name="Maskell D."/>
            <person name="Humphreys T."/>
            <person name="Roberts M."/>
            <person name="Barrow P.A."/>
            <person name="Dougan G."/>
            <person name="Parkhill J."/>
        </authorList>
    </citation>
    <scope>NUCLEOTIDE SEQUENCE [LARGE SCALE GENOMIC DNA]</scope>
    <source>
        <strain>287/91 / NCTC 13346</strain>
    </source>
</reference>
<sequence>MSKSLNIIWQYIRAFVLIYACLYAGIFLASLLPITIPGSIIGMLILFVLLALQILPAKWVNPGCYVLIRYMALLFVPIGVGVMQYFDLLRAQFGPVVVSCAISTLVVFVVVSWSSHLIHGERKVVGQKGTKK</sequence>
<name>YOHJ_SALG2</name>
<protein>
    <recommendedName>
        <fullName evidence="1">UPF0299 membrane protein YohJ</fullName>
    </recommendedName>
</protein>
<organism>
    <name type="scientific">Salmonella gallinarum (strain 287/91 / NCTC 13346)</name>
    <dbReference type="NCBI Taxonomy" id="550538"/>
    <lineage>
        <taxon>Bacteria</taxon>
        <taxon>Pseudomonadati</taxon>
        <taxon>Pseudomonadota</taxon>
        <taxon>Gammaproteobacteria</taxon>
        <taxon>Enterobacterales</taxon>
        <taxon>Enterobacteriaceae</taxon>
        <taxon>Salmonella</taxon>
    </lineage>
</organism>
<proteinExistence type="inferred from homology"/>